<comment type="function">
    <text>Binds to the G-box-like motif (5'-ACGTGGC-3') of the chalcone synthase (CHS) gene promoter. G-box and G-box-like motifs are defined in promoters of certain plant genes which are regulated by such diverse stimuli as light-induction or hormone control.</text>
</comment>
<comment type="subunit">
    <text>Binds DNA as a dimer.</text>
</comment>
<comment type="subcellular location">
    <subcellularLocation>
        <location>Nucleus</location>
    </subcellularLocation>
</comment>
<comment type="similarity">
    <text evidence="3">Belongs to the bZIP family.</text>
</comment>
<dbReference type="EMBL" id="X58576">
    <property type="protein sequence ID" value="CAA41452.1"/>
    <property type="molecule type" value="mRNA"/>
</dbReference>
<dbReference type="PIR" id="S16320">
    <property type="entry name" value="S16320"/>
</dbReference>
<dbReference type="SMR" id="Q99091"/>
<dbReference type="GO" id="GO:0005634">
    <property type="term" value="C:nucleus"/>
    <property type="evidence" value="ECO:0007669"/>
    <property type="project" value="UniProtKB-SubCell"/>
</dbReference>
<dbReference type="GO" id="GO:0003700">
    <property type="term" value="F:DNA-binding transcription factor activity"/>
    <property type="evidence" value="ECO:0007669"/>
    <property type="project" value="InterPro"/>
</dbReference>
<dbReference type="GO" id="GO:0000976">
    <property type="term" value="F:transcription cis-regulatory region binding"/>
    <property type="evidence" value="ECO:0007669"/>
    <property type="project" value="UniProtKB-ARBA"/>
</dbReference>
<dbReference type="CDD" id="cd14702">
    <property type="entry name" value="bZIP_plant_GBF1"/>
    <property type="match status" value="1"/>
</dbReference>
<dbReference type="Gene3D" id="1.20.5.170">
    <property type="match status" value="1"/>
</dbReference>
<dbReference type="InterPro" id="IPR004827">
    <property type="entry name" value="bZIP"/>
</dbReference>
<dbReference type="InterPro" id="IPR045314">
    <property type="entry name" value="bZIP_plant_GBF1"/>
</dbReference>
<dbReference type="InterPro" id="IPR046347">
    <property type="entry name" value="bZIP_sf"/>
</dbReference>
<dbReference type="InterPro" id="IPR044827">
    <property type="entry name" value="GBF-like"/>
</dbReference>
<dbReference type="InterPro" id="IPR012900">
    <property type="entry name" value="MFMR"/>
</dbReference>
<dbReference type="PANTHER" id="PTHR45967:SF20">
    <property type="entry name" value="G-BOX-BINDING FACTOR 1"/>
    <property type="match status" value="1"/>
</dbReference>
<dbReference type="PANTHER" id="PTHR45967">
    <property type="entry name" value="G-BOX-BINDING FACTOR 3-RELATED"/>
    <property type="match status" value="1"/>
</dbReference>
<dbReference type="Pfam" id="PF00170">
    <property type="entry name" value="bZIP_1"/>
    <property type="match status" value="1"/>
</dbReference>
<dbReference type="Pfam" id="PF07777">
    <property type="entry name" value="MFMR"/>
    <property type="match status" value="1"/>
</dbReference>
<dbReference type="SMART" id="SM00338">
    <property type="entry name" value="BRLZ"/>
    <property type="match status" value="1"/>
</dbReference>
<dbReference type="SUPFAM" id="SSF57959">
    <property type="entry name" value="Leucine zipper domain"/>
    <property type="match status" value="1"/>
</dbReference>
<dbReference type="PROSITE" id="PS50217">
    <property type="entry name" value="BZIP"/>
    <property type="match status" value="1"/>
</dbReference>
<dbReference type="PROSITE" id="PS00036">
    <property type="entry name" value="BZIP_BASIC"/>
    <property type="match status" value="1"/>
</dbReference>
<keyword id="KW-0238">DNA-binding</keyword>
<keyword id="KW-0539">Nucleus</keyword>
<keyword id="KW-0804">Transcription</keyword>
<keyword id="KW-0805">Transcription regulation</keyword>
<proteinExistence type="evidence at transcript level"/>
<gene>
    <name type="primary">CPRF3</name>
    <name type="synonym">CPRF-3</name>
</gene>
<accession>Q99091</accession>
<name>CPRF3_PETCR</name>
<reference key="1">
    <citation type="journal article" date="1991" name="EMBO J.">
        <title>Light-inducible and constitutively expressed DNA-binding proteins recognizing a plant promoter element with functional relevance in light responsiveness.</title>
        <authorList>
            <person name="Weisshaar B."/>
            <person name="Armstrong G.A."/>
            <person name="Block A."/>
            <person name="da Costa e Silva O."/>
            <person name="Hahlbrock K."/>
        </authorList>
    </citation>
    <scope>NUCLEOTIDE SEQUENCE [MRNA]</scope>
</reference>
<sequence>MSDGEEGTPMKHPKPASSVEEAPITTTPFPDLLSSMQAYYGGAAPAAFYASTVGSPSPHPYMWRNQHRFILPYGIPMQYPALFLPGGIFTHPIVPTDPNLAPTSGEVGRKISDEKGRTSAKKSIGVSGSTSFAVDKGAENQKAASSSDNDCPSLSSENGVDGSLEVRSNPLDVAAPGAIVVHDGMLPDQRVNDERELKRQRRKQSNRESARRSRLRKQAKSDELQERLDNLSKENRILRKNLQRISEACAEVTSENHSIKEELLRNYGPDGLTRLPRNLQEAAGELLIEDDTDGET</sequence>
<protein>
    <recommendedName>
        <fullName>Light-inducible protein CPRF3</fullName>
    </recommendedName>
    <alternativeName>
        <fullName>Common plant regulatory factor 3</fullName>
        <shortName>CPRF-3</shortName>
    </alternativeName>
</protein>
<organism>
    <name type="scientific">Petroselinum crispum</name>
    <name type="common">Parsley</name>
    <name type="synonym">Petroselinum hortense</name>
    <dbReference type="NCBI Taxonomy" id="4043"/>
    <lineage>
        <taxon>Eukaryota</taxon>
        <taxon>Viridiplantae</taxon>
        <taxon>Streptophyta</taxon>
        <taxon>Embryophyta</taxon>
        <taxon>Tracheophyta</taxon>
        <taxon>Spermatophyta</taxon>
        <taxon>Magnoliopsida</taxon>
        <taxon>eudicotyledons</taxon>
        <taxon>Gunneridae</taxon>
        <taxon>Pentapetalae</taxon>
        <taxon>asterids</taxon>
        <taxon>campanulids</taxon>
        <taxon>Apiales</taxon>
        <taxon>Apiaceae</taxon>
        <taxon>Apioideae</taxon>
        <taxon>apioid superclade</taxon>
        <taxon>Apieae</taxon>
        <taxon>Petroselinum</taxon>
    </lineage>
</organism>
<feature type="chain" id="PRO_0000076574" description="Light-inducible protein CPRF3">
    <location>
        <begin position="1"/>
        <end position="296"/>
    </location>
</feature>
<feature type="domain" description="bZIP" evidence="1">
    <location>
        <begin position="196"/>
        <end position="259"/>
    </location>
</feature>
<feature type="region of interest" description="Disordered" evidence="2">
    <location>
        <begin position="1"/>
        <end position="27"/>
    </location>
</feature>
<feature type="region of interest" description="Disordered" evidence="2">
    <location>
        <begin position="98"/>
        <end position="165"/>
    </location>
</feature>
<feature type="region of interest" description="Disordered" evidence="2">
    <location>
        <begin position="190"/>
        <end position="223"/>
    </location>
</feature>
<feature type="region of interest" description="Basic motif" evidence="1">
    <location>
        <begin position="198"/>
        <end position="220"/>
    </location>
</feature>
<feature type="region of interest" description="Leucine-zipper" evidence="1">
    <location>
        <begin position="224"/>
        <end position="245"/>
    </location>
</feature>
<feature type="compositionally biased region" description="Basic and acidic residues" evidence="2">
    <location>
        <begin position="107"/>
        <end position="117"/>
    </location>
</feature>
<feature type="compositionally biased region" description="Low complexity" evidence="2">
    <location>
        <begin position="145"/>
        <end position="156"/>
    </location>
</feature>
<evidence type="ECO:0000255" key="1">
    <source>
        <dbReference type="PROSITE-ProRule" id="PRU00978"/>
    </source>
</evidence>
<evidence type="ECO:0000256" key="2">
    <source>
        <dbReference type="SAM" id="MobiDB-lite"/>
    </source>
</evidence>
<evidence type="ECO:0000305" key="3"/>